<feature type="chain" id="PRO_0000244889" description="NADH-quinone oxidoreductase subunit H">
    <location>
        <begin position="1"/>
        <end position="349"/>
    </location>
</feature>
<feature type="transmembrane region" description="Helical" evidence="1">
    <location>
        <begin position="19"/>
        <end position="39"/>
    </location>
</feature>
<feature type="transmembrane region" description="Helical" evidence="1">
    <location>
        <begin position="88"/>
        <end position="108"/>
    </location>
</feature>
<feature type="transmembrane region" description="Helical" evidence="1">
    <location>
        <begin position="123"/>
        <end position="143"/>
    </location>
</feature>
<feature type="transmembrane region" description="Helical" evidence="1">
    <location>
        <begin position="161"/>
        <end position="181"/>
    </location>
</feature>
<feature type="transmembrane region" description="Helical" evidence="1">
    <location>
        <begin position="202"/>
        <end position="222"/>
    </location>
</feature>
<feature type="transmembrane region" description="Helical" evidence="1">
    <location>
        <begin position="249"/>
        <end position="269"/>
    </location>
</feature>
<feature type="transmembrane region" description="Helical" evidence="1">
    <location>
        <begin position="284"/>
        <end position="304"/>
    </location>
</feature>
<feature type="transmembrane region" description="Helical" evidence="1">
    <location>
        <begin position="325"/>
        <end position="345"/>
    </location>
</feature>
<sequence length="349" mass="38454">MEALLEPVVQLFGPAWPAVWTLTKIVAIIAPLMLCVAYLTLAERKVIGYMQVRIGPNRVGPKGLLQPIADGMKLLFKEIIVPTGASKGLFILGPILAIAPSLAAWAVVPFGEGMVLADVNAGLLFLLAITSVEVYGVIIAGWASNSKYPFLGSMRAAAQMVSYEVAMGFALICVLLISASLNLTDIVRSQGQGQFHEMGLSFLSWNWIPLFPMFIVFLISGIAETNRAPFDVVEGESEVVAGHMVEYSGMAFALFFLAEYANMILVSILTSVLFVGGWLSPVSFLPDGFFWLALKTAFFLFVFLWARATFPRFRYDHIMRLGWKVFIPITLVWVIVVAVWMMSPLSIWK</sequence>
<keyword id="KW-0997">Cell inner membrane</keyword>
<keyword id="KW-1003">Cell membrane</keyword>
<keyword id="KW-0472">Membrane</keyword>
<keyword id="KW-0520">NAD</keyword>
<keyword id="KW-0874">Quinone</keyword>
<keyword id="KW-1185">Reference proteome</keyword>
<keyword id="KW-1278">Translocase</keyword>
<keyword id="KW-0812">Transmembrane</keyword>
<keyword id="KW-1133">Transmembrane helix</keyword>
<keyword id="KW-0830">Ubiquinone</keyword>
<gene>
    <name evidence="1" type="primary">nuoH</name>
    <name type="ordered locus">AZOSEA27460</name>
    <name type="ORF">ebA4842</name>
</gene>
<accession>Q5P1E3</accession>
<reference key="1">
    <citation type="journal article" date="2005" name="Arch. Microbiol.">
        <title>The genome sequence of an anaerobic aromatic-degrading denitrifying bacterium, strain EbN1.</title>
        <authorList>
            <person name="Rabus R."/>
            <person name="Kube M."/>
            <person name="Heider J."/>
            <person name="Beck A."/>
            <person name="Heitmann K."/>
            <person name="Widdel F."/>
            <person name="Reinhardt R."/>
        </authorList>
    </citation>
    <scope>NUCLEOTIDE SEQUENCE [LARGE SCALE GENOMIC DNA]</scope>
    <source>
        <strain>DSM 19018 / LMG 30748 / EbN1</strain>
    </source>
</reference>
<dbReference type="EC" id="7.1.1.-" evidence="1"/>
<dbReference type="EMBL" id="CR555306">
    <property type="protein sequence ID" value="CAI08871.1"/>
    <property type="molecule type" value="Genomic_DNA"/>
</dbReference>
<dbReference type="RefSeq" id="WP_011238554.1">
    <property type="nucleotide sequence ID" value="NC_006513.1"/>
</dbReference>
<dbReference type="SMR" id="Q5P1E3"/>
<dbReference type="STRING" id="76114.ebA4842"/>
<dbReference type="KEGG" id="eba:ebA4842"/>
<dbReference type="eggNOG" id="COG1005">
    <property type="taxonomic scope" value="Bacteria"/>
</dbReference>
<dbReference type="HOGENOM" id="CLU_015134_0_1_4"/>
<dbReference type="OrthoDB" id="9803734at2"/>
<dbReference type="Proteomes" id="UP000006552">
    <property type="component" value="Chromosome"/>
</dbReference>
<dbReference type="GO" id="GO:0005886">
    <property type="term" value="C:plasma membrane"/>
    <property type="evidence" value="ECO:0007669"/>
    <property type="project" value="UniProtKB-SubCell"/>
</dbReference>
<dbReference type="GO" id="GO:0003954">
    <property type="term" value="F:NADH dehydrogenase activity"/>
    <property type="evidence" value="ECO:0007669"/>
    <property type="project" value="TreeGrafter"/>
</dbReference>
<dbReference type="GO" id="GO:0016655">
    <property type="term" value="F:oxidoreductase activity, acting on NAD(P)H, quinone or similar compound as acceptor"/>
    <property type="evidence" value="ECO:0007669"/>
    <property type="project" value="UniProtKB-UniRule"/>
</dbReference>
<dbReference type="GO" id="GO:0048038">
    <property type="term" value="F:quinone binding"/>
    <property type="evidence" value="ECO:0007669"/>
    <property type="project" value="UniProtKB-KW"/>
</dbReference>
<dbReference type="GO" id="GO:0009060">
    <property type="term" value="P:aerobic respiration"/>
    <property type="evidence" value="ECO:0007669"/>
    <property type="project" value="TreeGrafter"/>
</dbReference>
<dbReference type="HAMAP" id="MF_01350">
    <property type="entry name" value="NDH1_NuoH"/>
    <property type="match status" value="1"/>
</dbReference>
<dbReference type="InterPro" id="IPR001694">
    <property type="entry name" value="NADH_UbQ_OxRdtase_su1/FPO"/>
</dbReference>
<dbReference type="InterPro" id="IPR018086">
    <property type="entry name" value="NADH_UbQ_OxRdtase_su1_CS"/>
</dbReference>
<dbReference type="NCBIfam" id="NF004741">
    <property type="entry name" value="PRK06076.1-2"/>
    <property type="match status" value="1"/>
</dbReference>
<dbReference type="NCBIfam" id="NF004742">
    <property type="entry name" value="PRK06076.1-3"/>
    <property type="match status" value="1"/>
</dbReference>
<dbReference type="PANTHER" id="PTHR11432">
    <property type="entry name" value="NADH DEHYDROGENASE SUBUNIT 1"/>
    <property type="match status" value="1"/>
</dbReference>
<dbReference type="PANTHER" id="PTHR11432:SF3">
    <property type="entry name" value="NADH-UBIQUINONE OXIDOREDUCTASE CHAIN 1"/>
    <property type="match status" value="1"/>
</dbReference>
<dbReference type="Pfam" id="PF00146">
    <property type="entry name" value="NADHdh"/>
    <property type="match status" value="1"/>
</dbReference>
<dbReference type="PROSITE" id="PS00667">
    <property type="entry name" value="COMPLEX1_ND1_1"/>
    <property type="match status" value="1"/>
</dbReference>
<dbReference type="PROSITE" id="PS00668">
    <property type="entry name" value="COMPLEX1_ND1_2"/>
    <property type="match status" value="1"/>
</dbReference>
<proteinExistence type="inferred from homology"/>
<comment type="function">
    <text evidence="1">NDH-1 shuttles electrons from NADH, via FMN and iron-sulfur (Fe-S) centers, to quinones in the respiratory chain. The immediate electron acceptor for the enzyme in this species is believed to be ubiquinone. Couples the redox reaction to proton translocation (for every two electrons transferred, four hydrogen ions are translocated across the cytoplasmic membrane), and thus conserves the redox energy in a proton gradient. This subunit may bind ubiquinone.</text>
</comment>
<comment type="catalytic activity">
    <reaction evidence="1">
        <text>a quinone + NADH + 5 H(+)(in) = a quinol + NAD(+) + 4 H(+)(out)</text>
        <dbReference type="Rhea" id="RHEA:57888"/>
        <dbReference type="ChEBI" id="CHEBI:15378"/>
        <dbReference type="ChEBI" id="CHEBI:24646"/>
        <dbReference type="ChEBI" id="CHEBI:57540"/>
        <dbReference type="ChEBI" id="CHEBI:57945"/>
        <dbReference type="ChEBI" id="CHEBI:132124"/>
    </reaction>
</comment>
<comment type="subunit">
    <text evidence="1">NDH-1 is composed of 14 different subunits. Subunits NuoA, H, J, K, L, M, N constitute the membrane sector of the complex.</text>
</comment>
<comment type="subcellular location">
    <subcellularLocation>
        <location evidence="1">Cell inner membrane</location>
        <topology evidence="1">Multi-pass membrane protein</topology>
    </subcellularLocation>
</comment>
<comment type="similarity">
    <text evidence="1">Belongs to the complex I subunit 1 family.</text>
</comment>
<evidence type="ECO:0000255" key="1">
    <source>
        <dbReference type="HAMAP-Rule" id="MF_01350"/>
    </source>
</evidence>
<organism>
    <name type="scientific">Aromatoleum aromaticum (strain DSM 19018 / LMG 30748 / EbN1)</name>
    <name type="common">Azoarcus sp. (strain EbN1)</name>
    <dbReference type="NCBI Taxonomy" id="76114"/>
    <lineage>
        <taxon>Bacteria</taxon>
        <taxon>Pseudomonadati</taxon>
        <taxon>Pseudomonadota</taxon>
        <taxon>Betaproteobacteria</taxon>
        <taxon>Rhodocyclales</taxon>
        <taxon>Rhodocyclaceae</taxon>
        <taxon>Aromatoleum</taxon>
    </lineage>
</organism>
<protein>
    <recommendedName>
        <fullName evidence="1">NADH-quinone oxidoreductase subunit H</fullName>
        <ecNumber evidence="1">7.1.1.-</ecNumber>
    </recommendedName>
    <alternativeName>
        <fullName evidence="1">NADH dehydrogenase I subunit H</fullName>
    </alternativeName>
    <alternativeName>
        <fullName evidence="1">NDH-1 subunit H</fullName>
    </alternativeName>
</protein>
<name>NUOH_AROAE</name>